<evidence type="ECO:0000269" key="1">
    <source>
    </source>
</evidence>
<evidence type="ECO:0000269" key="2">
    <source>
    </source>
</evidence>
<evidence type="ECO:0000269" key="3">
    <source>
    </source>
</evidence>
<evidence type="ECO:0000305" key="4"/>
<gene>
    <name type="ORF">4</name>
</gene>
<name>TERM_BP35C</name>
<comment type="function">
    <text evidence="2">Acts as a primer for viral genomic replication. DNA terminal protein is covalently linked to the 5'-ends of both strands of the genome through a phosphodiester bond between the beta-hydroxyl group of a tyrosine residue and the 5'-phosphate of the terminal deoxythymidylate. This protein is essential for DNA replication and is involved in the priming of DNA elongation.</text>
</comment>
<comment type="subunit">
    <text evidence="3">Interacts with the DNA-binding protein P1.</text>
</comment>
<comment type="subcellular location">
    <subcellularLocation>
        <location evidence="4">Virion</location>
    </subcellularLocation>
</comment>
<reference key="1">
    <citation type="journal article" date="2003" name="Virology">
        <title>Comparative analysis of bacterial viruses Bam35, infecting a gram-positive host, and PRD1, infecting gram-negative hosts, demonstrates a viral lineage.</title>
        <authorList>
            <person name="Ravantti J.J."/>
            <person name="Gaidelyte A."/>
            <person name="Bamford D.H."/>
            <person name="Bamford J.K."/>
        </authorList>
    </citation>
    <scope>NUCLEOTIDE SEQUENCE</scope>
</reference>
<reference key="2">
    <citation type="journal article" date="2012" name="Proc. Natl. Acad. Sci. U.S.A.">
        <title>Functional eukaryotic nuclear localization signals are widespread in terminal proteins of bacteriophages.</title>
        <authorList>
            <person name="Redrejo-Rodriguez M."/>
            <person name="Munoz-Espin D."/>
            <person name="Holguera I."/>
            <person name="Mencia M."/>
            <person name="Salas M."/>
        </authorList>
    </citation>
    <scope>SUBCELLULAR LOCATION</scope>
    <scope>NUCLEAR LOCALIZATION SIGNAL</scope>
</reference>
<reference key="3">
    <citation type="journal article" date="2016" name="Nucleic Acids Res.">
        <title>Disclosing early steps of protein-primed genome replication of the Gram-positive tectivirus Bam35.</title>
        <authorList>
            <person name="Berjon-Otero M."/>
            <person name="Villar L."/>
            <person name="Salas M."/>
            <person name="Redrejo-Rodriguez M."/>
        </authorList>
    </citation>
    <scope>FUNCTION</scope>
    <scope>MUTAGENESIS OF TYR-194; TYR-202; TYR-215; TYR-229; TYR-234; TYR-244 AND TYR-245</scope>
    <scope>COVALENT DNA LINKAGE AT TYR-194</scope>
</reference>
<reference key="4">
    <citation type="journal article" date="2017" name="J. Virol.">
        <title>Bam35 tectivirus intraviral interaction map unveils new function and localization of phage ORFan proteins.</title>
        <authorList>
            <person name="Berjon-Otero M."/>
            <person name="Lechuga A."/>
            <person name="Mehla J."/>
            <person name="Uetz P."/>
            <person name="Salas M."/>
            <person name="Redrejo-Rodriguez M."/>
        </authorList>
    </citation>
    <scope>INTERACTION WITH PROTEIN P1</scope>
</reference>
<keyword id="KW-0190">Covalent protein-DNA linkage</keyword>
<keyword id="KW-0235">DNA replication</keyword>
<keyword id="KW-0547">Nucleotide-binding</keyword>
<keyword id="KW-0597">Phosphoprotein</keyword>
<keyword id="KW-1185">Reference proteome</keyword>
<keyword id="KW-1194">Viral DNA replication</keyword>
<keyword id="KW-0946">Virion</keyword>
<organismHost>
    <name type="scientific">Bacillus thuringiensis</name>
    <dbReference type="NCBI Taxonomy" id="1428"/>
</organismHost>
<protein>
    <recommendedName>
        <fullName>DNA terminal protein</fullName>
    </recommendedName>
</protein>
<organism>
    <name type="scientific">Bacillus phage Bam35c</name>
    <name type="common">Bacillus thuringiensis bacteriophage Bam35c</name>
    <dbReference type="NCBI Taxonomy" id="236750"/>
    <lineage>
        <taxon>Viruses</taxon>
        <taxon>Varidnaviria</taxon>
        <taxon>Bamfordvirae</taxon>
        <taxon>Preplasmiviricota</taxon>
        <taxon>Tectiliviricetes</taxon>
        <taxon>Kalamavirales</taxon>
        <taxon>Tectiviridae</taxon>
        <taxon>Betatectivirus</taxon>
        <taxon>Betatectivirus Bam35</taxon>
    </lineage>
</organism>
<sequence>MANKRLKKKLETKRKKSLLVSEGYSKKETKKLKGRELETVYKKKAHNRKNRERAREIANLAKQWGLSPSKYNSWKKLLPEIERIKKEQDREAPFLLIYYQDFTGETDSKFIYDFKKRNNTRSRSQITESIIGWLQNAHNKLFLGRVAIRIVPKRDVSKTNTLWRNHGYVKIYEGQGKELSKLLTAIETIMVGVYDVKERDKYLKELVAKLRSLPYEKAKKNAKEIQKIYDTKSYKKESWDNDDYY</sequence>
<accession>Q6X3W5</accession>
<dbReference type="EMBL" id="AY257527">
    <property type="protein sequence ID" value="AAP83474.1"/>
    <property type="molecule type" value="Genomic_DNA"/>
</dbReference>
<dbReference type="RefSeq" id="NP_943750.1">
    <property type="nucleotide sequence ID" value="NC_005258.1"/>
</dbReference>
<dbReference type="SMR" id="Q6X3W5"/>
<dbReference type="KEGG" id="vg:2658242"/>
<dbReference type="OrthoDB" id="30137at10239"/>
<dbReference type="Proteomes" id="UP000002550">
    <property type="component" value="Genome"/>
</dbReference>
<dbReference type="GO" id="GO:0044423">
    <property type="term" value="C:virion component"/>
    <property type="evidence" value="ECO:0007669"/>
    <property type="project" value="UniProtKB-KW"/>
</dbReference>
<dbReference type="GO" id="GO:0000166">
    <property type="term" value="F:nucleotide binding"/>
    <property type="evidence" value="ECO:0007669"/>
    <property type="project" value="UniProtKB-KW"/>
</dbReference>
<dbReference type="GO" id="GO:0006260">
    <property type="term" value="P:DNA replication"/>
    <property type="evidence" value="ECO:0007669"/>
    <property type="project" value="UniProtKB-KW"/>
</dbReference>
<dbReference type="GO" id="GO:0039693">
    <property type="term" value="P:viral DNA genome replication"/>
    <property type="evidence" value="ECO:0007669"/>
    <property type="project" value="UniProtKB-KW"/>
</dbReference>
<feature type="chain" id="PRO_0000445360" description="DNA terminal protein">
    <location>
        <begin position="1"/>
        <end position="245"/>
    </location>
</feature>
<feature type="short sequence motif" description="Nuclear localization signal" evidence="1">
    <location>
        <begin position="4"/>
        <end position="55"/>
    </location>
</feature>
<feature type="site" description="Interaction with the viral DNA polymerase" evidence="2">
    <location>
        <position position="172"/>
    </location>
</feature>
<feature type="modified residue" description="O-(5'-phospho-DNA)-tyrosine" evidence="2">
    <location>
        <position position="194"/>
    </location>
</feature>
<feature type="mutagenesis site" description="Loss of DNA priming capacity." evidence="2">
    <original>Y</original>
    <variation>F</variation>
    <location>
        <position position="194"/>
    </location>
</feature>
<feature type="mutagenesis site" description="No effect on DNA priming capacity." evidence="2">
    <original>Y</original>
    <variation>F</variation>
    <location>
        <position position="202"/>
    </location>
</feature>
<feature type="mutagenesis site" description="No effect on DNA priming capacity." evidence="2">
    <original>Y</original>
    <variation>F</variation>
    <location>
        <position position="215"/>
    </location>
</feature>
<feature type="mutagenesis site" description="No effect on DNA priming capacity." evidence="2">
    <original>Y</original>
    <variation>F</variation>
    <location>
        <position position="229"/>
    </location>
</feature>
<feature type="mutagenesis site" description="No effect on DNA priming capacity." evidence="2">
    <original>Y</original>
    <variation>F</variation>
    <location>
        <position position="234"/>
    </location>
</feature>
<feature type="mutagenesis site" description="No effect on DNA priming capacity." evidence="2">
    <original>Y</original>
    <variation>F</variation>
    <location>
        <position position="244"/>
    </location>
</feature>
<feature type="mutagenesis site" description="No effect on DNA priming capacity." evidence="2">
    <original>Y</original>
    <variation>F</variation>
    <location>
        <position position="245"/>
    </location>
</feature>
<proteinExistence type="evidence at protein level"/>